<reference evidence="11 13" key="1">
    <citation type="journal article" date="1999" name="Dev. Growth Differ.">
        <title>Expression of helix-loop-helix type negative regulators of differentiation during limb regeneration in urodeles and anurans.</title>
        <authorList>
            <person name="Shimizu-Nishikawa K."/>
            <person name="Tazawa I."/>
            <person name="Uchiyama K."/>
            <person name="Yoshizato K."/>
        </authorList>
    </citation>
    <scope>NUCLEOTIDE SEQUENCE [MRNA]</scope>
    <scope>TISSUE SPECIFICITY</scope>
    <source>
        <tissue evidence="13">Regenerating limb blastema</tissue>
    </source>
</reference>
<reference evidence="14" key="2">
    <citation type="journal article" date="1999" name="Mech. Dev.">
        <title>Localized XId3 mRNA activation in Xenopus embryos by cytoplasmic polyadenylation.</title>
        <authorList>
            <person name="Afouda A.B."/>
            <person name="Reynaud-Deonauth S."/>
            <person name="Mohun T."/>
            <person name="Spohr G."/>
        </authorList>
    </citation>
    <scope>NUCLEOTIDE SEQUENCE [MRNA]</scope>
    <source>
        <tissue evidence="5">Oocyte</tissue>
    </source>
</reference>
<reference evidence="12" key="3">
    <citation type="submission" date="2004-06" db="EMBL/GenBank/DDBJ databases">
        <authorList>
            <consortium name="NIH - Xenopus Gene Collection (XGC) project"/>
        </authorList>
    </citation>
    <scope>NUCLEOTIDE SEQUENCE [LARGE SCALE MRNA]</scope>
    <source>
        <tissue evidence="12">Embryo</tissue>
    </source>
</reference>
<reference evidence="11" key="4">
    <citation type="journal article" date="1995" name="Mech. Dev.">
        <title>XIdx, a dominant negative regulator of bHLH function in early Xenopus embryos.</title>
        <authorList>
            <person name="Wilson R."/>
            <person name="Mohun T."/>
        </authorList>
    </citation>
    <scope>NUCLEOTIDE SEQUENCE [MRNA] OF 1-84</scope>
    <scope>TISSUE SPECIFICITY</scope>
    <scope>DEVELOPMENTAL STAGE</scope>
</reference>
<reference evidence="11" key="5">
    <citation type="journal article" date="2003" name="Dev. Biol.">
        <title>Cloning and characterization of Xenopus Id4 reveals differing roles for Id genes.</title>
        <authorList>
            <person name="Liu K.J."/>
            <person name="Harland R.M."/>
        </authorList>
    </citation>
    <scope>FUNCTION</scope>
    <scope>TISSUE SPECIFICITY</scope>
    <scope>DEVELOPMENTAL STAGE</scope>
    <scope>INDUCTION</scope>
</reference>
<reference evidence="11" key="6">
    <citation type="journal article" date="2004" name="Dev. Biol.">
        <title>Cardiac neural crest ablation alters Id2 gene expression in the developing heart.</title>
        <authorList>
            <person name="Martinsen B.J."/>
            <person name="Frasier A.J."/>
            <person name="Baker C.V."/>
            <person name="Lohr J.L."/>
        </authorList>
    </citation>
    <scope>TISSUE SPECIFICITY</scope>
</reference>
<gene>
    <name type="primary">id2-a</name>
    <name evidence="12" type="synonym">id2</name>
</gene>
<name>ID2A_XENLA</name>
<organism>
    <name type="scientific">Xenopus laevis</name>
    <name type="common">African clawed frog</name>
    <dbReference type="NCBI Taxonomy" id="8355"/>
    <lineage>
        <taxon>Eukaryota</taxon>
        <taxon>Metazoa</taxon>
        <taxon>Chordata</taxon>
        <taxon>Craniata</taxon>
        <taxon>Vertebrata</taxon>
        <taxon>Euteleostomi</taxon>
        <taxon>Amphibia</taxon>
        <taxon>Batrachia</taxon>
        <taxon>Anura</taxon>
        <taxon>Pipoidea</taxon>
        <taxon>Pipidae</taxon>
        <taxon>Xenopodinae</taxon>
        <taxon>Xenopus</taxon>
        <taxon>Xenopus</taxon>
    </lineage>
</organism>
<feature type="chain" id="PRO_0000390721" description="DNA-binding protein inhibitor ID-2-A">
    <location>
        <begin position="1"/>
        <end position="133"/>
    </location>
</feature>
<feature type="domain" description="bHLH" evidence="4">
    <location>
        <begin position="23"/>
        <end position="75"/>
    </location>
</feature>
<feature type="short sequence motif" description="Nuclear export signal" evidence="1">
    <location>
        <begin position="106"/>
        <end position="115"/>
    </location>
</feature>
<feature type="sequence conflict" description="In Ref. 2; CAB38648." evidence="11" ref="2">
    <original>T</original>
    <variation>D</variation>
    <location>
        <position position="104"/>
    </location>
</feature>
<sequence length="133" mass="14791">MKAFSPVRSVRKSSLTEHSLGIARSKTPVDDPMSLLYNMNDCYSKLKELVPSIPQNKKVSKMEILQHVIDYILDLQLTLDSHPSIVSLHHLPRVGGNTSRTPLTPLNTDISILSLQAAEFSSEFTDESKSLCP</sequence>
<proteinExistence type="evidence at transcript level"/>
<keyword id="KW-0090">Biological rhythms</keyword>
<keyword id="KW-0963">Cytoplasm</keyword>
<keyword id="KW-0217">Developmental protein</keyword>
<keyword id="KW-0539">Nucleus</keyword>
<keyword id="KW-1185">Reference proteome</keyword>
<keyword id="KW-0678">Repressor</keyword>
<keyword id="KW-0804">Transcription</keyword>
<keyword id="KW-0805">Transcription regulation</keyword>
<accession>Q9PWJ5</accession>
<accession>Q8AVD1</accession>
<accession>Q9YGL0</accession>
<dbReference type="EMBL" id="AB019520">
    <property type="protein sequence ID" value="BAA76634.1"/>
    <property type="molecule type" value="mRNA"/>
</dbReference>
<dbReference type="EMBL" id="AJ133647">
    <property type="protein sequence ID" value="CAB38648.1"/>
    <property type="molecule type" value="mRNA"/>
</dbReference>
<dbReference type="EMBL" id="BC072843">
    <property type="protein sequence ID" value="AAH72843.1"/>
    <property type="molecule type" value="mRNA"/>
</dbReference>
<dbReference type="EMBL" id="BC041527">
    <property type="protein sequence ID" value="AAH41527.1"/>
    <property type="status" value="ALT_INIT"/>
    <property type="molecule type" value="mRNA"/>
</dbReference>
<dbReference type="RefSeq" id="NP_001081902.1">
    <property type="nucleotide sequence ID" value="NM_001088433.1"/>
</dbReference>
<dbReference type="SMR" id="Q9PWJ5"/>
<dbReference type="DNASU" id="398111"/>
<dbReference type="GeneID" id="398111"/>
<dbReference type="KEGG" id="xla:398111"/>
<dbReference type="AGR" id="Xenbase:XB-GENE-481302"/>
<dbReference type="CTD" id="398111"/>
<dbReference type="Xenbase" id="XB-GENE-481302">
    <property type="gene designation" value="id2.L"/>
</dbReference>
<dbReference type="OMA" id="FPTELMT"/>
<dbReference type="OrthoDB" id="10047910at2759"/>
<dbReference type="Proteomes" id="UP000186698">
    <property type="component" value="Chromosome 5L"/>
</dbReference>
<dbReference type="GO" id="GO:0005737">
    <property type="term" value="C:cytoplasm"/>
    <property type="evidence" value="ECO:0007669"/>
    <property type="project" value="UniProtKB-SubCell"/>
</dbReference>
<dbReference type="GO" id="GO:0005634">
    <property type="term" value="C:nucleus"/>
    <property type="evidence" value="ECO:0000250"/>
    <property type="project" value="UniProtKB"/>
</dbReference>
<dbReference type="GO" id="GO:0032991">
    <property type="term" value="C:protein-containing complex"/>
    <property type="evidence" value="ECO:0000250"/>
    <property type="project" value="UniProtKB"/>
</dbReference>
<dbReference type="GO" id="GO:0043425">
    <property type="term" value="F:bHLH transcription factor binding"/>
    <property type="evidence" value="ECO:0000250"/>
    <property type="project" value="UniProtKB"/>
</dbReference>
<dbReference type="GO" id="GO:0046983">
    <property type="term" value="F:protein dimerization activity"/>
    <property type="evidence" value="ECO:0007669"/>
    <property type="project" value="InterPro"/>
</dbReference>
<dbReference type="GO" id="GO:0003714">
    <property type="term" value="F:transcription corepressor activity"/>
    <property type="evidence" value="ECO:0000318"/>
    <property type="project" value="GO_Central"/>
</dbReference>
<dbReference type="GO" id="GO:0090398">
    <property type="term" value="P:cellular senescence"/>
    <property type="evidence" value="ECO:0000250"/>
    <property type="project" value="UniProtKB"/>
</dbReference>
<dbReference type="GO" id="GO:0032922">
    <property type="term" value="P:circadian regulation of gene expression"/>
    <property type="evidence" value="ECO:0007669"/>
    <property type="project" value="TreeGrafter"/>
</dbReference>
<dbReference type="GO" id="GO:0048557">
    <property type="term" value="P:embryonic digestive tract morphogenesis"/>
    <property type="evidence" value="ECO:0000250"/>
    <property type="project" value="UniProtKB"/>
</dbReference>
<dbReference type="GO" id="GO:0061031">
    <property type="term" value="P:endodermal digestive tract morphogenesis"/>
    <property type="evidence" value="ECO:0000250"/>
    <property type="project" value="UniProtKB"/>
</dbReference>
<dbReference type="GO" id="GO:0014904">
    <property type="term" value="P:myotube cell development"/>
    <property type="evidence" value="ECO:0000304"/>
    <property type="project" value="AgBase"/>
</dbReference>
<dbReference type="GO" id="GO:0010629">
    <property type="term" value="P:negative regulation of gene expression"/>
    <property type="evidence" value="ECO:0000250"/>
    <property type="project" value="UniProtKB"/>
</dbReference>
<dbReference type="GO" id="GO:0000122">
    <property type="term" value="P:negative regulation of transcription by RNA polymerase II"/>
    <property type="evidence" value="ECO:0000314"/>
    <property type="project" value="UniProtKB"/>
</dbReference>
<dbReference type="GO" id="GO:0030182">
    <property type="term" value="P:neuron differentiation"/>
    <property type="evidence" value="ECO:0000318"/>
    <property type="project" value="GO_Central"/>
</dbReference>
<dbReference type="GO" id="GO:0048663">
    <property type="term" value="P:neuron fate commitment"/>
    <property type="evidence" value="ECO:0000250"/>
    <property type="project" value="UniProtKB"/>
</dbReference>
<dbReference type="GO" id="GO:0045777">
    <property type="term" value="P:positive regulation of blood pressure"/>
    <property type="evidence" value="ECO:0000250"/>
    <property type="project" value="UniProtKB"/>
</dbReference>
<dbReference type="GO" id="GO:0045893">
    <property type="term" value="P:positive regulation of DNA-templated transcription"/>
    <property type="evidence" value="ECO:0000250"/>
    <property type="project" value="UniProtKB"/>
</dbReference>
<dbReference type="GO" id="GO:0010628">
    <property type="term" value="P:positive regulation of gene expression"/>
    <property type="evidence" value="ECO:0000250"/>
    <property type="project" value="UniProtKB"/>
</dbReference>
<dbReference type="GO" id="GO:0048661">
    <property type="term" value="P:positive regulation of smooth muscle cell proliferation"/>
    <property type="evidence" value="ECO:0000250"/>
    <property type="project" value="UniProtKB"/>
</dbReference>
<dbReference type="GO" id="GO:0042752">
    <property type="term" value="P:regulation of circadian rhythm"/>
    <property type="evidence" value="ECO:0000250"/>
    <property type="project" value="UniProtKB"/>
</dbReference>
<dbReference type="GO" id="GO:0010468">
    <property type="term" value="P:regulation of gene expression"/>
    <property type="evidence" value="ECO:0000250"/>
    <property type="project" value="UniProtKB"/>
</dbReference>
<dbReference type="GO" id="GO:2000177">
    <property type="term" value="P:regulation of neural precursor cell proliferation"/>
    <property type="evidence" value="ECO:0000250"/>
    <property type="project" value="UniProtKB"/>
</dbReference>
<dbReference type="GO" id="GO:0045664">
    <property type="term" value="P:regulation of neuron differentiation"/>
    <property type="evidence" value="ECO:0000250"/>
    <property type="project" value="UniProtKB"/>
</dbReference>
<dbReference type="CDD" id="cd19692">
    <property type="entry name" value="bHLH_dnHLH_ID2"/>
    <property type="match status" value="1"/>
</dbReference>
<dbReference type="FunFam" id="4.10.280.10:FF:000055">
    <property type="entry name" value="DNA-binding protein inhibitor ID-2"/>
    <property type="match status" value="1"/>
</dbReference>
<dbReference type="Gene3D" id="4.10.280.10">
    <property type="entry name" value="Helix-loop-helix DNA-binding domain"/>
    <property type="match status" value="1"/>
</dbReference>
<dbReference type="InterPro" id="IPR011598">
    <property type="entry name" value="bHLH_dom"/>
</dbReference>
<dbReference type="InterPro" id="IPR026052">
    <property type="entry name" value="DNA-bd_prot-inh"/>
</dbReference>
<dbReference type="InterPro" id="IPR036638">
    <property type="entry name" value="HLH_DNA-bd_sf"/>
</dbReference>
<dbReference type="PANTHER" id="PTHR11723">
    <property type="entry name" value="DNA-BINDING PROTEIN INHIBITOR"/>
    <property type="match status" value="1"/>
</dbReference>
<dbReference type="PANTHER" id="PTHR11723:SF5">
    <property type="entry name" value="DNA-BINDING PROTEIN INHIBITOR ID-2"/>
    <property type="match status" value="1"/>
</dbReference>
<dbReference type="Pfam" id="PF00010">
    <property type="entry name" value="HLH"/>
    <property type="match status" value="1"/>
</dbReference>
<dbReference type="SMART" id="SM00353">
    <property type="entry name" value="HLH"/>
    <property type="match status" value="1"/>
</dbReference>
<dbReference type="SUPFAM" id="SSF47459">
    <property type="entry name" value="HLH, helix-loop-helix DNA-binding domain"/>
    <property type="match status" value="1"/>
</dbReference>
<dbReference type="PROSITE" id="PS50888">
    <property type="entry name" value="BHLH"/>
    <property type="match status" value="1"/>
</dbReference>
<evidence type="ECO:0000250" key="1"/>
<evidence type="ECO:0000250" key="2">
    <source>
        <dbReference type="UniProtKB" id="P41136"/>
    </source>
</evidence>
<evidence type="ECO:0000250" key="3">
    <source>
        <dbReference type="UniProtKB" id="Q02363"/>
    </source>
</evidence>
<evidence type="ECO:0000255" key="4">
    <source>
        <dbReference type="PROSITE-ProRule" id="PRU00981"/>
    </source>
</evidence>
<evidence type="ECO:0000269" key="5">
    <source>
    </source>
</evidence>
<evidence type="ECO:0000269" key="6">
    <source>
    </source>
</evidence>
<evidence type="ECO:0000269" key="7">
    <source>
    </source>
</evidence>
<evidence type="ECO:0000269" key="8">
    <source>
    </source>
</evidence>
<evidence type="ECO:0000269" key="9">
    <source>
    </source>
</evidence>
<evidence type="ECO:0000303" key="10">
    <source>
    </source>
</evidence>
<evidence type="ECO:0000305" key="11"/>
<evidence type="ECO:0000312" key="12">
    <source>
        <dbReference type="EMBL" id="AAH72843.1"/>
    </source>
</evidence>
<evidence type="ECO:0000312" key="13">
    <source>
        <dbReference type="EMBL" id="BAA76634.1"/>
    </source>
</evidence>
<evidence type="ECO:0000312" key="14">
    <source>
        <dbReference type="EMBL" id="CAB38648.1"/>
    </source>
</evidence>
<comment type="function">
    <text evidence="7">Transcriptional regulator (lacking a basic DNA binding domain) which negatively regulates the basic helix-loop-helix (bHLH) transcription factors by forming heterodimers and inhibiting their DNA binding and transcriptional activity. Inhibits the activity of both neurogenic (neurod1/neuroD) and myogenic (myod1/myoD) bHLH factors. May play a role in the regulation of the circadian clock.</text>
</comment>
<comment type="subunit">
    <text evidence="3">Heterodimer with other HLH proteins.</text>
</comment>
<comment type="subcellular location">
    <subcellularLocation>
        <location evidence="2">Cytoplasm</location>
    </subcellularLocation>
    <subcellularLocation>
        <location evidence="2">Nucleus</location>
    </subcellularLocation>
</comment>
<comment type="tissue specificity">
    <text evidence="6 7 8 9">In the embryo, expressed in a range of tissues, with primary expression in the developing pronephros; expressed in the pronephric anlage, and by the swimming tadpole stages expressed robustly in the pronephric tubules and weakly in the pronephric duct. Expressed in the secondary heart field. In the developing nervous system, expressed in the neural crest and in the neural folds during neurula stages, and at stage 20 in the neural tube, ventral mesoderm and mid-hindbrain boundary. By early tailbud stages, expressed in the neural tube, somites and branchial arches. In tadpoles (stage 37/38), expressed in the heart, eye, otic vesicle, somites and branchial arches. Also expressed in migrating muscle cells. Expressed at a low level in limbs, with expression decreasing as limbs develop, but expressed at a high level in blastemas (regenerated limbs), where expression is localized primarily to the blastemal epidermis. Widely expressed in adults with highest expression in the spleen, skin, intestine and brain, and at a much lower level in testis and heart.</text>
</comment>
<comment type="developmental stage">
    <text evidence="7 9">Expressed both maternally and zygotically. Maternal expression declines during cleavage and blastula stages with zygotic expression increasing from gastrulation. From neurula stage onwards, expression levels are relatively constant.</text>
</comment>
<comment type="induction">
    <text evidence="7">May be induced by Notch signaling.</text>
</comment>
<comment type="sequence caution" evidence="11">
    <conflict type="erroneous initiation">
        <sequence resource="EMBL-CDS" id="AAH41527"/>
    </conflict>
</comment>
<protein>
    <recommendedName>
        <fullName>DNA-binding protein inhibitor ID-2-A</fullName>
    </recommendedName>
    <alternativeName>
        <fullName>Inhibitor of DNA binding 2-A</fullName>
        <shortName evidence="10">XId2</shortName>
    </alternativeName>
    <alternativeName>
        <fullName>Inhibitor of differentiation 2-A</fullName>
    </alternativeName>
</protein>